<gene>
    <name type="ordered locus">lpp1485</name>
</gene>
<reference key="1">
    <citation type="journal article" date="2004" name="Nat. Genet.">
        <title>Evidence in the Legionella pneumophila genome for exploitation of host cell functions and high genome plasticity.</title>
        <authorList>
            <person name="Cazalet C."/>
            <person name="Rusniok C."/>
            <person name="Brueggemann H."/>
            <person name="Zidane N."/>
            <person name="Magnier A."/>
            <person name="Ma L."/>
            <person name="Tichit M."/>
            <person name="Jarraud S."/>
            <person name="Bouchier C."/>
            <person name="Vandenesch F."/>
            <person name="Kunst F."/>
            <person name="Etienne J."/>
            <person name="Glaser P."/>
            <person name="Buchrieser C."/>
        </authorList>
    </citation>
    <scope>NUCLEOTIDE SEQUENCE [LARGE SCALE GENOMIC DNA]</scope>
    <source>
        <strain>Paris</strain>
    </source>
</reference>
<accession>Q5X535</accession>
<feature type="chain" id="PRO_0000196669" description="Putative phosphoenolpyruvate synthase regulatory protein">
    <location>
        <begin position="1"/>
        <end position="271"/>
    </location>
</feature>
<feature type="binding site" evidence="1">
    <location>
        <begin position="152"/>
        <end position="159"/>
    </location>
    <ligand>
        <name>ADP</name>
        <dbReference type="ChEBI" id="CHEBI:456216"/>
    </ligand>
</feature>
<organism>
    <name type="scientific">Legionella pneumophila (strain Paris)</name>
    <dbReference type="NCBI Taxonomy" id="297246"/>
    <lineage>
        <taxon>Bacteria</taxon>
        <taxon>Pseudomonadati</taxon>
        <taxon>Pseudomonadota</taxon>
        <taxon>Gammaproteobacteria</taxon>
        <taxon>Legionellales</taxon>
        <taxon>Legionellaceae</taxon>
        <taxon>Legionella</taxon>
    </lineage>
</organism>
<protein>
    <recommendedName>
        <fullName evidence="1">Putative phosphoenolpyruvate synthase regulatory protein</fullName>
        <shortName evidence="1">PEP synthase regulatory protein</shortName>
        <shortName evidence="1">PSRP</shortName>
        <ecNumber evidence="1">2.7.11.33</ecNumber>
        <ecNumber evidence="1">2.7.4.28</ecNumber>
    </recommendedName>
    <alternativeName>
        <fullName evidence="1">Pyruvate, water dikinase regulatory protein</fullName>
    </alternativeName>
</protein>
<proteinExistence type="inferred from homology"/>
<keyword id="KW-0418">Kinase</keyword>
<keyword id="KW-0547">Nucleotide-binding</keyword>
<keyword id="KW-0723">Serine/threonine-protein kinase</keyword>
<keyword id="KW-0808">Transferase</keyword>
<name>PSRP_LEGPA</name>
<dbReference type="EC" id="2.7.11.33" evidence="1"/>
<dbReference type="EC" id="2.7.4.28" evidence="1"/>
<dbReference type="EMBL" id="CR628336">
    <property type="protein sequence ID" value="CAH12636.1"/>
    <property type="molecule type" value="Genomic_DNA"/>
</dbReference>
<dbReference type="RefSeq" id="WP_011213810.1">
    <property type="nucleotide sequence ID" value="NC_006368.1"/>
</dbReference>
<dbReference type="SMR" id="Q5X535"/>
<dbReference type="KEGG" id="lpp:lpp1485"/>
<dbReference type="LegioList" id="lpp1485"/>
<dbReference type="HOGENOM" id="CLU_046206_1_0_6"/>
<dbReference type="GO" id="GO:0043531">
    <property type="term" value="F:ADP binding"/>
    <property type="evidence" value="ECO:0007669"/>
    <property type="project" value="UniProtKB-UniRule"/>
</dbReference>
<dbReference type="GO" id="GO:0005524">
    <property type="term" value="F:ATP binding"/>
    <property type="evidence" value="ECO:0007669"/>
    <property type="project" value="InterPro"/>
</dbReference>
<dbReference type="GO" id="GO:0016776">
    <property type="term" value="F:phosphotransferase activity, phosphate group as acceptor"/>
    <property type="evidence" value="ECO:0007669"/>
    <property type="project" value="UniProtKB-UniRule"/>
</dbReference>
<dbReference type="GO" id="GO:0004674">
    <property type="term" value="F:protein serine/threonine kinase activity"/>
    <property type="evidence" value="ECO:0007669"/>
    <property type="project" value="UniProtKB-UniRule"/>
</dbReference>
<dbReference type="HAMAP" id="MF_01062">
    <property type="entry name" value="PSRP"/>
    <property type="match status" value="1"/>
</dbReference>
<dbReference type="InterPro" id="IPR005177">
    <property type="entry name" value="Kinase-pyrophosphorylase"/>
</dbReference>
<dbReference type="InterPro" id="IPR026530">
    <property type="entry name" value="PSRP"/>
</dbReference>
<dbReference type="NCBIfam" id="NF003742">
    <property type="entry name" value="PRK05339.1"/>
    <property type="match status" value="1"/>
</dbReference>
<dbReference type="PANTHER" id="PTHR31756">
    <property type="entry name" value="PYRUVATE, PHOSPHATE DIKINASE REGULATORY PROTEIN 1, CHLOROPLASTIC"/>
    <property type="match status" value="1"/>
</dbReference>
<dbReference type="PANTHER" id="PTHR31756:SF3">
    <property type="entry name" value="PYRUVATE, PHOSPHATE DIKINASE REGULATORY PROTEIN 1, CHLOROPLASTIC"/>
    <property type="match status" value="1"/>
</dbReference>
<dbReference type="Pfam" id="PF03618">
    <property type="entry name" value="Kinase-PPPase"/>
    <property type="match status" value="1"/>
</dbReference>
<sequence length="271" mass="30748">MKRYVFMLSDGTGITAETLGNSLITQFENIQFEKITIPYIDSTHRAESVVLRINQCFSEQGTKPLVFMTLVDPEIRQAIKKAHACVFDLFSIFIGPLENELEEKSSYTVGRTHGVANVKSYSHRIEAIDFALSHDDGIKTRGYDKADIILIGVSRCGKTPSCLYMALQYGILAANYPFTEEDLVGFRLPEVLRPYKPKLFGLTIDAQRLQQIRSERRPNSKYASAEQCRLEVTEVEAMYQRENIPYINSTKYSIEEISTKVLAIAGLQRKI</sequence>
<evidence type="ECO:0000255" key="1">
    <source>
        <dbReference type="HAMAP-Rule" id="MF_01062"/>
    </source>
</evidence>
<comment type="function">
    <text evidence="1">Bifunctional serine/threonine kinase and phosphorylase involved in the regulation of the phosphoenolpyruvate synthase (PEPS) by catalyzing its phosphorylation/dephosphorylation.</text>
</comment>
<comment type="catalytic activity">
    <reaction evidence="1">
        <text>[pyruvate, water dikinase] + ADP = [pyruvate, water dikinase]-phosphate + AMP + H(+)</text>
        <dbReference type="Rhea" id="RHEA:46020"/>
        <dbReference type="Rhea" id="RHEA-COMP:11425"/>
        <dbReference type="Rhea" id="RHEA-COMP:11426"/>
        <dbReference type="ChEBI" id="CHEBI:15378"/>
        <dbReference type="ChEBI" id="CHEBI:43176"/>
        <dbReference type="ChEBI" id="CHEBI:68546"/>
        <dbReference type="ChEBI" id="CHEBI:456215"/>
        <dbReference type="ChEBI" id="CHEBI:456216"/>
        <dbReference type="EC" id="2.7.11.33"/>
    </reaction>
</comment>
<comment type="catalytic activity">
    <reaction evidence="1">
        <text>[pyruvate, water dikinase]-phosphate + phosphate + H(+) = [pyruvate, water dikinase] + diphosphate</text>
        <dbReference type="Rhea" id="RHEA:48580"/>
        <dbReference type="Rhea" id="RHEA-COMP:11425"/>
        <dbReference type="Rhea" id="RHEA-COMP:11426"/>
        <dbReference type="ChEBI" id="CHEBI:15378"/>
        <dbReference type="ChEBI" id="CHEBI:33019"/>
        <dbReference type="ChEBI" id="CHEBI:43176"/>
        <dbReference type="ChEBI" id="CHEBI:43474"/>
        <dbReference type="ChEBI" id="CHEBI:68546"/>
        <dbReference type="EC" id="2.7.4.28"/>
    </reaction>
</comment>
<comment type="similarity">
    <text evidence="1">Belongs to the pyruvate, phosphate/water dikinase regulatory protein family. PSRP subfamily.</text>
</comment>